<proteinExistence type="evidence at protein level"/>
<organism>
    <name type="scientific">Rattus norvegicus</name>
    <name type="common">Rat</name>
    <dbReference type="NCBI Taxonomy" id="10116"/>
    <lineage>
        <taxon>Eukaryota</taxon>
        <taxon>Metazoa</taxon>
        <taxon>Chordata</taxon>
        <taxon>Craniata</taxon>
        <taxon>Vertebrata</taxon>
        <taxon>Euteleostomi</taxon>
        <taxon>Mammalia</taxon>
        <taxon>Eutheria</taxon>
        <taxon>Euarchontoglires</taxon>
        <taxon>Glires</taxon>
        <taxon>Rodentia</taxon>
        <taxon>Myomorpha</taxon>
        <taxon>Muroidea</taxon>
        <taxon>Muridae</taxon>
        <taxon>Murinae</taxon>
        <taxon>Rattus</taxon>
    </lineage>
</organism>
<comment type="function">
    <text evidence="6 7 8 9 10 11 12 14 15 16 17 18 19">Originally identified as neuronal protein that specifically associates with HTT/huntingtin and the binding is enhanced by an expanded polyglutamine repeat within HTT possibly affecting HAP1 interaction properties. Both HTT and HAP1 are involved in intracellular trafficking and HAP1 is proposed to link HTT to motor proteins and/or transport cargos. Seems to play a role in vesicular transport within neurons and axons such as from early endosomes to late endocytic compartments and to promote neurite outgrowth. The vesicular transport function via association with microtubule-dependent transporters can be attenuated by association with mutant HTT. Involved in the axonal transport of BDNF and its activity-dependent secretion; the function seems to involve HTT, DCTN1 and a complex with SORT1. Involved in APP trafficking and seems to facilitate APP anterograde transport and membrane insertion thereby possibly reducing processing into amyloid beta. Involved in delivery of gamma-aminobutyric acid (GABA(A)) receptors to synapses; the function is dependent on kinesin motor protein KIF5 and is disrupted by HTT with expanded polyglutamine repeat. Involved in regulation of autophagosome motility by promoting efficient retrograde axonal transport. Seems to be involved in regulation of membrane receptor recycling and degradation, and respective signal transduction, including GABA(A) receptors, tyrosine kinase receptors, EGFR, IP3 receptor and androgen receptor. Among others suggested to be involved in control of feeding behavior (involving hypothalamic GABA(A) receptors), cerebellar and brainstem development (involving AHI1 and NTRK1/TrkA), postnatal neurogenesis (involving hypothalamic NTRK2/TrkB), and ITPR1/InsP3R1-mediated Ca(2+) release (involving HTT and possibly the effect of mutant HTT). Via association with DCTN1/dynactin p150-glued and HTT/huntingtin involved in cytoplasmic retention of REST in neurons. May be involved in ciliogenesis. Involved in regulation of exocytosis. Isoform A but not isoform B seems to be involved in formation of cytoplasmic inclusion bodies (STBs). In case of anomalous expression of TBP, can sequester a subset of TBP into STBs; sequestration is enhanced by an expanded polyglutamine repeat within TBP.</text>
</comment>
<comment type="subunit">
    <text evidence="3 7 8 11 12 13 14 15 16 17 18 19 20 21 22">Self-associates. Interacts with HTT/huntingtin; enhanced by an expanded polyglutamine repeat within HTT. Isoform A interacts with DCTN1; decreased in presence of HTT with expanded polyglutamine repeat; decreased by phosphorylation of Hap1 isoform A at Thr-598. Isoform A interacts with KLC2; decreased by phosphorylation of Hap1 isoform A at Thr-598. Isoform A interacts with ITPR1 and APP. Isoform A interacts with AR; decreased by an expanded polyglutamine repeat within AR. Isoform A interacts with YWHAZ; enhanced by phosphorylation of Hap1 isoform A at Thr-598. Isoform A interacts with BDNF and SORT1; probably forming a complex involved in proBDNF trafficking, degradation and processing. Interacts with TBP, AHI1, HGS and KALRN. Interacts with KIF5A, KIF5B, KIF5C and GABRB3; indicative for an HAP1:KIF5 complex transporting a GABA(A) receptor as cargo. Interacts with ATXN3; in STBs. Interacts with NTRK2; HAP1 stabilizes association of NTRK2 with SORT1 preventing NTRK2 degradation. Interacts with CFAP263.</text>
</comment>
<comment type="interaction">
    <interactant intactId="EBI-994539">
        <id>P54256</id>
    </interactant>
    <interactant intactId="EBI-994539">
        <id>P54256</id>
        <label>Hap1</label>
    </interactant>
    <organismsDiffer>false</organismsDiffer>
    <experiments>3</experiments>
</comment>
<comment type="interaction">
    <interactant intactId="EBI-994539">
        <id>P54256</id>
    </interactant>
    <interactant intactId="EBI-7092491">
        <id>Q9JJ50</id>
        <label>Hgs</label>
    </interactant>
    <organismsDiffer>false</organismsDiffer>
    <experiments>5</experiments>
</comment>
<comment type="interaction">
    <interactant intactId="EBI-994539">
        <id>P54256</id>
    </interactant>
    <interactant intactId="EBI-1397166">
        <id>P97924</id>
        <label>Kalrn</label>
    </interactant>
    <organismsDiffer>false</organismsDiffer>
    <experiments>3</experiments>
</comment>
<comment type="interaction">
    <interactant intactId="EBI-994539">
        <id>P54256</id>
    </interactant>
    <interactant intactId="EBI-724352">
        <id>Q14203</id>
        <label>DCTN1</label>
    </interactant>
    <organismsDiffer>true</organismsDiffer>
    <experiments>4</experiments>
</comment>
<comment type="interaction">
    <interactant intactId="EBI-994539">
        <id>P54256</id>
    </interactant>
    <interactant intactId="EBI-466029">
        <id>P42858</id>
        <label>HTT</label>
    </interactant>
    <organismsDiffer>true</organismsDiffer>
    <experiments>3</experiments>
</comment>
<comment type="interaction">
    <interactant intactId="EBI-994539">
        <id>P54256</id>
    </interactant>
    <interactant intactId="EBI-741421">
        <id>Q15154</id>
        <label>PCM1</label>
    </interactant>
    <organismsDiffer>true</organismsDiffer>
    <experiments>3</experiments>
</comment>
<comment type="interaction">
    <interactant intactId="EBI-994549">
        <id>P54256-1</id>
    </interactant>
    <interactant intactId="EBI-994549">
        <id>P54256-1</id>
        <label>Hap1</label>
    </interactant>
    <organismsDiffer>false</organismsDiffer>
    <experiments>2</experiments>
</comment>
<comment type="interaction">
    <interactant intactId="EBI-994549">
        <id>P54256-1</id>
    </interactant>
    <interactant intactId="EBI-8614640">
        <id>P29994</id>
        <label>Itpr1</label>
    </interactant>
    <organismsDiffer>false</organismsDiffer>
    <experiments>2</experiments>
</comment>
<comment type="interaction">
    <interactant intactId="EBI-994554">
        <id>P54256-2</id>
    </interactant>
    <interactant intactId="EBI-994554">
        <id>P54256-2</id>
        <label>Hap1</label>
    </interactant>
    <organismsDiffer>false</organismsDiffer>
    <experiments>2</experiments>
</comment>
<comment type="interaction">
    <interactant intactId="EBI-994554">
        <id>P54256-2</id>
    </interactant>
    <interactant intactId="EBI-7092491">
        <id>Q9JJ50</id>
        <label>Hgs</label>
    </interactant>
    <organismsDiffer>false</organismsDiffer>
    <experiments>5</experiments>
</comment>
<comment type="interaction">
    <interactant intactId="EBI-994554">
        <id>P54256-2</id>
    </interactant>
    <interactant intactId="EBI-8614640">
        <id>P29994</id>
        <label>Itpr1</label>
    </interactant>
    <organismsDiffer>false</organismsDiffer>
    <experiments>4</experiments>
</comment>
<comment type="interaction">
    <interactant intactId="EBI-994554">
        <id>P54256-2</id>
    </interactant>
    <interactant intactId="EBI-347088">
        <id>P63104</id>
        <label>YWHAZ</label>
    </interactant>
    <organismsDiffer>true</organismsDiffer>
    <experiments>4</experiments>
</comment>
<comment type="subcellular location">
    <subcellularLocation>
        <location evidence="23 24">Cytoplasm</location>
    </subcellularLocation>
    <subcellularLocation>
        <location evidence="23">Presynapse</location>
    </subcellularLocation>
    <subcellularLocation>
        <location evidence="22 23">Cytoplasm</location>
        <location evidence="22 23">Cytoskeleton</location>
    </subcellularLocation>
    <subcellularLocation>
        <location evidence="23">Cell projection</location>
        <location evidence="23">Dendritic spine</location>
    </subcellularLocation>
    <subcellularLocation>
        <location evidence="23">Cell projection</location>
        <location evidence="23">Dendrite</location>
    </subcellularLocation>
    <subcellularLocation>
        <location evidence="23">Cell projection</location>
        <location evidence="23">Axon</location>
    </subcellularLocation>
    <subcellularLocation>
        <location>Lysosome</location>
    </subcellularLocation>
    <subcellularLocation>
        <location evidence="23">Endoplasmic reticulum</location>
    </subcellularLocation>
    <subcellularLocation>
        <location evidence="23">Mitochondrion</location>
    </subcellularLocation>
    <subcellularLocation>
        <location evidence="23">Nucleus</location>
    </subcellularLocation>
    <subcellularLocation>
        <location evidence="2">Cytoplasmic vesicle</location>
        <location evidence="2">Autophagosome</location>
    </subcellularLocation>
    <subcellularLocation>
        <location evidence="7">Early endosome</location>
    </subcellularLocation>
    <subcellularLocation>
        <location evidence="11">Cell projection</location>
        <location evidence="11">Growth cone</location>
    </subcellularLocation>
    <text evidence="24">Localizes to large nonmembrane-bound cytoplasmic bodies found in various types of neurons, called stigmoid bodies (STBs); STB formation is regulated by the ratio of isoform A to isoform B (PubMed:9798945). In the nucleus localizes to nuclear rods.</text>
</comment>
<comment type="subcellular location">
    <molecule>Isoform B</molecule>
    <subcellularLocation>
        <location evidence="6">Cytoplasm</location>
    </subcellularLocation>
    <text evidence="6">In NGF-stimulated PC2 cells isoform A can move anterogradely fom neurite cell body to neurite terminal and is localized to growth cone tips whereas isoform B stays in the cell body.</text>
</comment>
<comment type="subcellular location">
    <molecule>Isoform A</molecule>
    <subcellularLocation>
        <location evidence="6">Cell projection</location>
        <location evidence="6">Growth cone</location>
    </subcellularLocation>
    <subcellularLocation>
        <location evidence="6 14">Cell projection</location>
        <location evidence="6 14">Neuron projection</location>
    </subcellularLocation>
    <subcellularLocation>
        <location evidence="6">Cytoplasmic vesicle</location>
        <location evidence="6">Secretory vesicle</location>
        <location evidence="6">Synaptic vesicle</location>
    </subcellularLocation>
    <subcellularLocation>
        <location evidence="6">Presynapse</location>
    </subcellularLocation>
    <text evidence="6 14">In NGF-stimulated PC2 cells isoform A can move anterogradely fom neurite cell body to neurite terminal and is localized to growth cone tips whereas isoform B stays in the cell body (PubMed:10924259). Localization to neuronal processes and neurite tips is decreased by YWHAZ (PubMed:17166838).</text>
</comment>
<comment type="alternative products">
    <event type="alternative splicing"/>
    <isoform>
        <id>P54256-1</id>
        <name>B</name>
        <name>Long</name>
        <sequence type="displayed"/>
    </isoform>
    <isoform>
        <id>P54256-2</id>
        <name>A</name>
        <name>Short</name>
        <sequence type="described" ref="VSP_004280"/>
    </isoform>
</comment>
<comment type="tissue specificity">
    <text>In the brain, especially in the olfactory bulb and in the brain stem. No detectable expression in peripheral tissues such as lung, testis, spleen, and small intestine.</text>
</comment>
<comment type="PTM">
    <text evidence="12">Isoform A is phosphorylated on Thr-598.</text>
</comment>
<name>HAP1_RAT</name>
<protein>
    <recommendedName>
        <fullName>Huntingtin-associated protein 1</fullName>
        <shortName>HAP-1</shortName>
    </recommendedName>
</protein>
<accession>P54256</accession>
<reference key="1">
    <citation type="journal article" date="1995" name="Nature">
        <title>A huntingtin-associated protein enriched in brain with implications for pathology.</title>
        <authorList>
            <person name="Li X.-J."/>
            <person name="Li S.-H."/>
            <person name="Sharp A.H."/>
            <person name="Nucifora F.C. Jr."/>
            <person name="Schilling G."/>
            <person name="Lanahan A."/>
            <person name="Worley P."/>
            <person name="Snyder S.H."/>
            <person name="Ross C.A."/>
        </authorList>
    </citation>
    <scope>NUCLEOTIDE SEQUENCE [MRNA] (ISOFORMS A AND B)</scope>
    <source>
        <tissue>Brain</tissue>
    </source>
</reference>
<reference key="2">
    <citation type="journal article" date="1997" name="Hum. Mol. Genet.">
        <title>Huntingtin-associated protein 1 (HAP1) binds to a Trio-like polypeptide, with a rac1 guanine nucleotide exchange factor domain.</title>
        <authorList>
            <person name="Colomer V."/>
            <person name="Engelender S."/>
            <person name="Sharp A.H."/>
            <person name="Duan K."/>
            <person name="Cooper J.K."/>
            <person name="Lanahan A."/>
            <person name="Lyford G."/>
            <person name="Worley P."/>
            <person name="Ross C.A."/>
        </authorList>
    </citation>
    <scope>INTERACTION WITH KALRN</scope>
</reference>
<reference key="3">
    <citation type="journal article" date="1997" name="Hum. Mol. Genet.">
        <title>Huntingtin-associated protein 1 (HAP1) interacts with the p150Glued subunit of dynactin.</title>
        <authorList>
            <person name="Engelender S."/>
            <person name="Sharp A.H."/>
            <person name="Colomer V."/>
            <person name="Tokito M.K."/>
            <person name="Lanahan A."/>
            <person name="Worley P."/>
            <person name="Holzbaur E.L.F."/>
            <person name="Ross C.A."/>
        </authorList>
    </citation>
    <scope>INTERACTION WITH DCTN1</scope>
</reference>
<reference key="4">
    <citation type="journal article" date="1998" name="J. Neurochem.">
        <title>Association of HAP1 isoforms with a unique cytoplasmic structure.</title>
        <authorList>
            <person name="Li S.H."/>
            <person name="Gutekunst C.A."/>
            <person name="Hersch S.M."/>
            <person name="Li X.J."/>
        </authorList>
    </citation>
    <scope>SUBCELLULAR LOCATION</scope>
    <scope>SELF-ASSOCIATION</scope>
</reference>
<reference key="5">
    <citation type="journal article" date="1998" name="J. Neurosci.">
        <title>Interaction of huntingtin-associated protein with dynactin P150Glued.</title>
        <authorList>
            <person name="Li S.H."/>
            <person name="Gutekunst C.A."/>
            <person name="Hersch S.M."/>
            <person name="Li X.J."/>
        </authorList>
    </citation>
    <scope>INTERACTION WITH DCTN1 AND HTT</scope>
    <scope>SUBCELLULAR LOCATION</scope>
</reference>
<reference key="6">
    <citation type="journal article" date="1998" name="J. Neurosci.">
        <title>The cellular and subcellular localization of huntingtin-associated protein 1 (HAP1): comparison with huntingtin in rat and human.</title>
        <authorList>
            <person name="Gutekunst C.A."/>
            <person name="Li S.H."/>
            <person name="Yi H."/>
            <person name="Ferrante R.J."/>
            <person name="Li X.J."/>
            <person name="Hersch S.M."/>
        </authorList>
    </citation>
    <scope>SUBCELLULAR LOCATION</scope>
</reference>
<reference key="7">
    <citation type="journal article" date="2000" name="Mol. Cell. Neurosci.">
        <title>Expression of huntingtin-associated protein-1 in neuronal cells implicates a role in neuritic growth.</title>
        <authorList>
            <person name="Li S.H."/>
            <person name="Li H."/>
            <person name="Torre E.R."/>
            <person name="Li X.J."/>
        </authorList>
    </citation>
    <scope>FUNCTION</scope>
    <scope>SUBCELLULAR LOCATION</scope>
</reference>
<reference key="8">
    <citation type="journal article" date="2002" name="J. Biol. Chem.">
        <title>Huntingtin-associated protein 1 interacts with hepatocyte growth factor-regulated tyrosine kinase substrate and functions in endosomal trafficking.</title>
        <authorList>
            <person name="Li Y."/>
            <person name="Chin L.S."/>
            <person name="Levey A.I."/>
            <person name="Li L."/>
        </authorList>
    </citation>
    <scope>FUNCTION</scope>
    <scope>SUBCELLULAR LOCATION</scope>
    <scope>INTERACTION WITH HGS</scope>
</reference>
<reference key="9">
    <citation type="journal article" date="2003" name="J. Neurosci.">
        <title>Lack of huntingtin-associated protein-1 causes neuronal death resembling hypothalamic degeneration in Huntington's disease.</title>
        <authorList>
            <person name="Li S.H."/>
            <person name="Yu Z.X."/>
            <person name="Li C.L."/>
            <person name="Nguyen H.P."/>
            <person name="Zhou Y.X."/>
            <person name="Deng C."/>
            <person name="Li X.J."/>
        </authorList>
    </citation>
    <scope>FUNCTION</scope>
</reference>
<reference key="10">
    <citation type="journal article" date="2003" name="Neuron">
        <title>Huntingtin and huntingtin-associated protein 1 influence neuronal calcium signaling mediated by inositol-(1,4,5) triphosphate receptor type 1.</title>
        <authorList>
            <person name="Tang T.S."/>
            <person name="Tu H."/>
            <person name="Chan E.Y."/>
            <person name="Maximov A."/>
            <person name="Wang Z."/>
            <person name="Wellington C.L."/>
            <person name="Hayden M.R."/>
            <person name="Bezprozvanny I."/>
        </authorList>
    </citation>
    <scope>FUNCTION</scope>
    <scope>INTERACTION WITH ITPR1</scope>
</reference>
<reference key="11">
    <citation type="journal article" date="2004" name="Cell">
        <title>Huntingtin controls neurotrophic support and survival of neurons by enhancing BDNF vesicular transport along microtubules.</title>
        <authorList>
            <person name="Gauthier L.R."/>
            <person name="Charrin B.C."/>
            <person name="Borrell-Pages M."/>
            <person name="Dompierre J.P."/>
            <person name="Rangone H."/>
            <person name="Cordelieres F.P."/>
            <person name="De Mey J."/>
            <person name="MacDonald M.E."/>
            <person name="Lessmann V."/>
            <person name="Humbert S."/>
            <person name="Saudou F."/>
        </authorList>
    </citation>
    <scope>FUNCTION</scope>
</reference>
<reference key="12">
    <citation type="journal article" date="2006" name="Hum. Mol. Genet.">
        <title>Huntingtin-associated protein 1 (HAP1) interacts with androgen receptor (AR) and suppresses SBMA-mutant-AR-induced apoptosis.</title>
        <authorList>
            <person name="Takeshita Y."/>
            <person name="Fujinaga R."/>
            <person name="Zhao C."/>
            <person name="Yanai A."/>
            <person name="Shinoda K."/>
        </authorList>
    </citation>
    <scope>INTERACTION WITH AR</scope>
</reference>
<reference key="13">
    <citation type="journal article" date="2006" name="J. Biol. Chem.">
        <title>Interaction of Huntingtin-associated protein-1 with kinesin light chain: implications in intracellular trafficking in neurons.</title>
        <authorList>
            <person name="McGuire J.R."/>
            <person name="Rong J."/>
            <person name="Li S.H."/>
            <person name="Li X.J."/>
        </authorList>
    </citation>
    <scope>FUNCTION</scope>
    <scope>SUBCELLULAR LOCATION</scope>
    <scope>INTERACTION WITH KLC2</scope>
</reference>
<reference key="14">
    <citation type="journal article" date="2006" name="J. Neurosci.">
        <title>Regulation of intracellular trafficking of huntingtin-associated protein-1 is critical for TrkA protein levels and neurite outgrowth.</title>
        <authorList>
            <person name="Rong J."/>
            <person name="McGuire J.R."/>
            <person name="Fang Z.H."/>
            <person name="Sheng G."/>
            <person name="Shin J.Y."/>
            <person name="Li S.H."/>
            <person name="Li X.J."/>
        </authorList>
    </citation>
    <scope>FUNCTION</scope>
    <scope>PHOSPHORYLATION AT THR-598 (ISOFORM A)</scope>
    <scope>INTERACTION WITH KLC2 AND DCTN1</scope>
</reference>
<reference key="15">
    <citation type="journal article" date="2007" name="J. Biol. Chem.">
        <title>14-3-3 protein interacts with Huntingtin-associated protein 1 and regulates its trafficking.</title>
        <authorList>
            <person name="Rong J."/>
            <person name="Li S."/>
            <person name="Sheng G."/>
            <person name="Wu M."/>
            <person name="Coblitz B."/>
            <person name="Li M."/>
            <person name="Fu H."/>
            <person name="Li X.J."/>
        </authorList>
    </citation>
    <scope>FUNCTION</scope>
    <scope>SUBCELLULAR LOCATION</scope>
    <scope>INTERACTION WITH YWHAZ; KLC2 AND DCTN1</scope>
    <scope>PHOSPHORYLATION (ISOFORM A)</scope>
</reference>
<reference key="16">
    <citation type="journal article" date="2010" name="J. Biol. Chem.">
        <title>Huntingtin-associated protein-1 interacts with pro-brain-derived neurotrophic factor and mediates its transport and release.</title>
        <authorList>
            <person name="Wu L.L."/>
            <person name="Fan Y."/>
            <person name="Li S."/>
            <person name="Li X.J."/>
            <person name="Zhou X.F."/>
        </authorList>
    </citation>
    <scope>FUNCTION</scope>
    <scope>INTERACTION WITH BDNF</scope>
</reference>
<reference key="17">
    <citation type="journal article" date="2010" name="Neuron">
        <title>Delivery of GABAARs to synapses is mediated by HAP1-KIF5 and disrupted by mutant huntingtin.</title>
        <authorList>
            <person name="Twelvetrees A.E."/>
            <person name="Yuen E.Y."/>
            <person name="Arancibia-Carcamo I.L."/>
            <person name="MacAskill A.F."/>
            <person name="Rostaing P."/>
            <person name="Lumb M.J."/>
            <person name="Humbert S."/>
            <person name="Triller A."/>
            <person name="Saudou F."/>
            <person name="Yan Z."/>
            <person name="Kittler J.T."/>
        </authorList>
    </citation>
    <scope>FUNCTION</scope>
    <scope>INTERACTION WITH KIF5A; KIF5B; KIF5C AND GABRB3</scope>
</reference>
<reference key="18">
    <citation type="journal article" date="2011" name="J. Biol. Chem.">
        <title>Precursor of brain-derived neurotrophic factor (proBDNF) forms a complex with Huntingtin-associated protein-1 (HAP1) and sortilin that modulates proBDNF trafficking, degradation, and processing.</title>
        <authorList>
            <person name="Yang M."/>
            <person name="Lim Y."/>
            <person name="Li X."/>
            <person name="Zhong J.H."/>
            <person name="Zhou X.F."/>
        </authorList>
    </citation>
    <scope>FUNCTION</scope>
    <scope>INTERACTION WITH BDNF AND SORT1</scope>
</reference>
<reference key="19">
    <citation type="journal article" date="2012" name="J. Neurochem.">
        <title>Huntingtin associated protein 1 regulates trafficking of the amyloid precursor protein and modulates amyloid beta levels in neurons.</title>
        <authorList>
            <person name="Yang G.Z."/>
            <person name="Yang M."/>
            <person name="Lim Y."/>
            <person name="Lu J.J."/>
            <person name="Wang T.H."/>
            <person name="Qi J.G."/>
            <person name="Zhong J.H."/>
            <person name="Zhou X.F."/>
        </authorList>
    </citation>
    <scope>FUNCTION</scope>
    <scope>INTERACTION WITH APP</scope>
</reference>
<reference key="20">
    <citation type="journal article" date="2012" name="Nat. Commun.">
        <title>Quantitative maps of protein phosphorylation sites across 14 different rat organs and tissues.</title>
        <authorList>
            <person name="Lundby A."/>
            <person name="Secher A."/>
            <person name="Lage K."/>
            <person name="Nordsborg N.B."/>
            <person name="Dmytriyev A."/>
            <person name="Lundby C."/>
            <person name="Olsen J.V."/>
        </authorList>
    </citation>
    <scope>IDENTIFICATION BY MASS SPECTROMETRY [LARGE SCALE ANALYSIS]</scope>
</reference>
<reference key="21">
    <citation type="journal article" date="2013" name="J. Biol. Chem.">
        <title>The Joubert syndrome-associated missense mutation (V443D) in the Abelson-helper integration site 1 (AHI1) protein alters its localization and protein-protein interactions.</title>
        <authorList>
            <person name="Tuz K."/>
            <person name="Hsiao Y.C."/>
            <person name="Juarez O."/>
            <person name="Shi B."/>
            <person name="Harmon E.Y."/>
            <person name="Phelps I.G."/>
            <person name="Lennartz M.R."/>
            <person name="Glass I.A."/>
            <person name="Doherty D."/>
            <person name="Ferland R.J."/>
        </authorList>
    </citation>
    <scope>FUNCTION</scope>
    <scope>INTERACTION WITH BDNF</scope>
</reference>
<dbReference type="EMBL" id="U38370">
    <property type="protein sequence ID" value="AAC52326.1"/>
    <property type="molecule type" value="mRNA"/>
</dbReference>
<dbReference type="EMBL" id="U38373">
    <property type="protein sequence ID" value="AAC52327.1"/>
    <property type="molecule type" value="mRNA"/>
</dbReference>
<dbReference type="PIR" id="S67492">
    <property type="entry name" value="S67492"/>
</dbReference>
<dbReference type="PIR" id="S67495">
    <property type="entry name" value="S67495"/>
</dbReference>
<dbReference type="RefSeq" id="NP_077047.1">
    <property type="nucleotide sequence ID" value="NM_024133.2"/>
</dbReference>
<dbReference type="RefSeq" id="NP_817091.1">
    <property type="nucleotide sequence ID" value="NM_177982.1"/>
</dbReference>
<dbReference type="SMR" id="P54256"/>
<dbReference type="BioGRID" id="248077">
    <property type="interactions" value="21"/>
</dbReference>
<dbReference type="CORUM" id="P54256"/>
<dbReference type="FunCoup" id="P54256">
    <property type="interactions" value="202"/>
</dbReference>
<dbReference type="IntAct" id="P54256">
    <property type="interactions" value="26"/>
</dbReference>
<dbReference type="MINT" id="P54256"/>
<dbReference type="STRING" id="10116.ENSRNOP00000020603"/>
<dbReference type="iPTMnet" id="P54256"/>
<dbReference type="PhosphoSitePlus" id="P54256"/>
<dbReference type="jPOST" id="P54256"/>
<dbReference type="PaxDb" id="10116-ENSRNOP00000020603"/>
<dbReference type="GeneID" id="29430"/>
<dbReference type="KEGG" id="rno:29430"/>
<dbReference type="UCSC" id="RGD:68327">
    <molecule id="P54256-1"/>
    <property type="organism name" value="rat"/>
</dbReference>
<dbReference type="AGR" id="RGD:68327"/>
<dbReference type="CTD" id="9001"/>
<dbReference type="RGD" id="68327">
    <property type="gene designation" value="Hap1"/>
</dbReference>
<dbReference type="eggNOG" id="KOG4360">
    <property type="taxonomic scope" value="Eukaryota"/>
</dbReference>
<dbReference type="InParanoid" id="P54256"/>
<dbReference type="PhylomeDB" id="P54256"/>
<dbReference type="PRO" id="PR:P54256"/>
<dbReference type="Proteomes" id="UP000002494">
    <property type="component" value="Unplaced"/>
</dbReference>
<dbReference type="GO" id="GO:0005776">
    <property type="term" value="C:autophagosome"/>
    <property type="evidence" value="ECO:0000266"/>
    <property type="project" value="RGD"/>
</dbReference>
<dbReference type="GO" id="GO:1904115">
    <property type="term" value="C:axon cytoplasm"/>
    <property type="evidence" value="ECO:0007669"/>
    <property type="project" value="GOC"/>
</dbReference>
<dbReference type="GO" id="GO:0043679">
    <property type="term" value="C:axon terminus"/>
    <property type="evidence" value="ECO:0000314"/>
    <property type="project" value="RGD"/>
</dbReference>
<dbReference type="GO" id="GO:0005814">
    <property type="term" value="C:centriole"/>
    <property type="evidence" value="ECO:0000266"/>
    <property type="project" value="RGD"/>
</dbReference>
<dbReference type="GO" id="GO:0005813">
    <property type="term" value="C:centrosome"/>
    <property type="evidence" value="ECO:0000266"/>
    <property type="project" value="RGD"/>
</dbReference>
<dbReference type="GO" id="GO:0005737">
    <property type="term" value="C:cytoplasm"/>
    <property type="evidence" value="ECO:0000314"/>
    <property type="project" value="UniProtKB"/>
</dbReference>
<dbReference type="GO" id="GO:0031410">
    <property type="term" value="C:cytoplasmic vesicle"/>
    <property type="evidence" value="ECO:0000266"/>
    <property type="project" value="RGD"/>
</dbReference>
<dbReference type="GO" id="GO:0030425">
    <property type="term" value="C:dendrite"/>
    <property type="evidence" value="ECO:0000314"/>
    <property type="project" value="RGD"/>
</dbReference>
<dbReference type="GO" id="GO:0043197">
    <property type="term" value="C:dendritic spine"/>
    <property type="evidence" value="ECO:0007669"/>
    <property type="project" value="UniProtKB-SubCell"/>
</dbReference>
<dbReference type="GO" id="GO:0005769">
    <property type="term" value="C:early endosome"/>
    <property type="evidence" value="ECO:0000304"/>
    <property type="project" value="RGD"/>
</dbReference>
<dbReference type="GO" id="GO:0005783">
    <property type="term" value="C:endoplasmic reticulum"/>
    <property type="evidence" value="ECO:0007669"/>
    <property type="project" value="UniProtKB-SubCell"/>
</dbReference>
<dbReference type="GO" id="GO:0098982">
    <property type="term" value="C:GABA-ergic synapse"/>
    <property type="evidence" value="ECO:0000314"/>
    <property type="project" value="SynGO"/>
</dbReference>
<dbReference type="GO" id="GO:0030426">
    <property type="term" value="C:growth cone"/>
    <property type="evidence" value="ECO:0000314"/>
    <property type="project" value="RGD"/>
</dbReference>
<dbReference type="GO" id="GO:0016234">
    <property type="term" value="C:inclusion body"/>
    <property type="evidence" value="ECO:0000266"/>
    <property type="project" value="RGD"/>
</dbReference>
<dbReference type="GO" id="GO:0005770">
    <property type="term" value="C:late endosome"/>
    <property type="evidence" value="ECO:0000304"/>
    <property type="project" value="RGD"/>
</dbReference>
<dbReference type="GO" id="GO:0005764">
    <property type="term" value="C:lysosome"/>
    <property type="evidence" value="ECO:0007669"/>
    <property type="project" value="UniProtKB-SubCell"/>
</dbReference>
<dbReference type="GO" id="GO:0005739">
    <property type="term" value="C:mitochondrion"/>
    <property type="evidence" value="ECO:0000318"/>
    <property type="project" value="GO_Central"/>
</dbReference>
<dbReference type="GO" id="GO:0005634">
    <property type="term" value="C:nucleus"/>
    <property type="evidence" value="ECO:0007669"/>
    <property type="project" value="UniProtKB-SubCell"/>
</dbReference>
<dbReference type="GO" id="GO:0048471">
    <property type="term" value="C:perinuclear region of cytoplasm"/>
    <property type="evidence" value="ECO:0000314"/>
    <property type="project" value="RGD"/>
</dbReference>
<dbReference type="GO" id="GO:0099524">
    <property type="term" value="C:postsynaptic cytosol"/>
    <property type="evidence" value="ECO:0000314"/>
    <property type="project" value="SynGO"/>
</dbReference>
<dbReference type="GO" id="GO:0099523">
    <property type="term" value="C:presynaptic cytosol"/>
    <property type="evidence" value="ECO:0000314"/>
    <property type="project" value="SynGO"/>
</dbReference>
<dbReference type="GO" id="GO:0008021">
    <property type="term" value="C:synaptic vesicle"/>
    <property type="evidence" value="ECO:0007669"/>
    <property type="project" value="UniProtKB-SubCell"/>
</dbReference>
<dbReference type="GO" id="GO:0048403">
    <property type="term" value="F:brain-derived neurotrophic factor binding"/>
    <property type="evidence" value="ECO:0000314"/>
    <property type="project" value="UniProtKB"/>
</dbReference>
<dbReference type="GO" id="GO:0042802">
    <property type="term" value="F:identical protein binding"/>
    <property type="evidence" value="ECO:0000353"/>
    <property type="project" value="IntAct"/>
</dbReference>
<dbReference type="GO" id="GO:0017022">
    <property type="term" value="F:myosin binding"/>
    <property type="evidence" value="ECO:0000318"/>
    <property type="project" value="GO_Central"/>
</dbReference>
<dbReference type="GO" id="GO:0019904">
    <property type="term" value="F:protein domain specific binding"/>
    <property type="evidence" value="ECO:0000353"/>
    <property type="project" value="RGD"/>
</dbReference>
<dbReference type="GO" id="GO:0005102">
    <property type="term" value="F:signaling receptor binding"/>
    <property type="evidence" value="ECO:0000353"/>
    <property type="project" value="RGD"/>
</dbReference>
<dbReference type="GO" id="GO:0044325">
    <property type="term" value="F:transmembrane transporter binding"/>
    <property type="evidence" value="ECO:0000314"/>
    <property type="project" value="UniProtKB"/>
</dbReference>
<dbReference type="GO" id="GO:0008089">
    <property type="term" value="P:anterograde axonal transport"/>
    <property type="evidence" value="ECO:0000315"/>
    <property type="project" value="UniProtKB"/>
</dbReference>
<dbReference type="GO" id="GO:0006914">
    <property type="term" value="P:autophagy"/>
    <property type="evidence" value="ECO:0007669"/>
    <property type="project" value="UniProtKB-KW"/>
</dbReference>
<dbReference type="GO" id="GO:0030030">
    <property type="term" value="P:cell projection organization"/>
    <property type="evidence" value="ECO:0007669"/>
    <property type="project" value="UniProtKB-KW"/>
</dbReference>
<dbReference type="GO" id="GO:0071363">
    <property type="term" value="P:cellular response to growth factor stimulus"/>
    <property type="evidence" value="ECO:0000270"/>
    <property type="project" value="RGD"/>
</dbReference>
<dbReference type="GO" id="GO:0021549">
    <property type="term" value="P:cerebellum development"/>
    <property type="evidence" value="ECO:0000266"/>
    <property type="project" value="RGD"/>
</dbReference>
<dbReference type="GO" id="GO:0045022">
    <property type="term" value="P:early endosome to late endosome transport"/>
    <property type="evidence" value="ECO:0000304"/>
    <property type="project" value="RGD"/>
</dbReference>
<dbReference type="GO" id="GO:0006887">
    <property type="term" value="P:exocytosis"/>
    <property type="evidence" value="ECO:0007669"/>
    <property type="project" value="UniProtKB-KW"/>
</dbReference>
<dbReference type="GO" id="GO:0021979">
    <property type="term" value="P:hypothalamus cell differentiation"/>
    <property type="evidence" value="ECO:0000266"/>
    <property type="project" value="RGD"/>
</dbReference>
<dbReference type="GO" id="GO:0048311">
    <property type="term" value="P:mitochondrion distribution"/>
    <property type="evidence" value="ECO:0000318"/>
    <property type="project" value="GO_Central"/>
</dbReference>
<dbReference type="GO" id="GO:1902430">
    <property type="term" value="P:negative regulation of amyloid-beta formation"/>
    <property type="evidence" value="ECO:0000315"/>
    <property type="project" value="UniProtKB"/>
</dbReference>
<dbReference type="GO" id="GO:0022008">
    <property type="term" value="P:neurogenesis"/>
    <property type="evidence" value="ECO:0000266"/>
    <property type="project" value="RGD"/>
</dbReference>
<dbReference type="GO" id="GO:0031175">
    <property type="term" value="P:neuron projection development"/>
    <property type="evidence" value="ECO:0000314"/>
    <property type="project" value="UniProtKB"/>
</dbReference>
<dbReference type="GO" id="GO:0048011">
    <property type="term" value="P:neurotrophin TRK receptor signaling pathway"/>
    <property type="evidence" value="ECO:0000250"/>
    <property type="project" value="UniProtKB"/>
</dbReference>
<dbReference type="GO" id="GO:0045742">
    <property type="term" value="P:positive regulation of epidermal growth factor receptor signaling pathway"/>
    <property type="evidence" value="ECO:0000315"/>
    <property type="project" value="UniProtKB"/>
</dbReference>
<dbReference type="GO" id="GO:0090261">
    <property type="term" value="P:positive regulation of inclusion body assembly"/>
    <property type="evidence" value="ECO:0000314"/>
    <property type="project" value="UniProtKB"/>
</dbReference>
<dbReference type="GO" id="GO:0031587">
    <property type="term" value="P:positive regulation of inositol 1,4,5-trisphosphate-sensitive calcium-release channel activity"/>
    <property type="evidence" value="ECO:0000314"/>
    <property type="project" value="UniProtKB"/>
</dbReference>
<dbReference type="GO" id="GO:0050769">
    <property type="term" value="P:positive regulation of neurogenesis"/>
    <property type="evidence" value="ECO:0000266"/>
    <property type="project" value="RGD"/>
</dbReference>
<dbReference type="GO" id="GO:0010976">
    <property type="term" value="P:positive regulation of neuron projection development"/>
    <property type="evidence" value="ECO:0000314"/>
    <property type="project" value="RGD"/>
</dbReference>
<dbReference type="GO" id="GO:0032901">
    <property type="term" value="P:positive regulation of neurotrophin production"/>
    <property type="evidence" value="ECO:0000314"/>
    <property type="project" value="UniProtKB"/>
</dbReference>
<dbReference type="GO" id="GO:1902857">
    <property type="term" value="P:positive regulation of non-motile cilium assembly"/>
    <property type="evidence" value="ECO:0000250"/>
    <property type="project" value="UniProtKB"/>
</dbReference>
<dbReference type="GO" id="GO:0032230">
    <property type="term" value="P:positive regulation of synaptic transmission, GABAergic"/>
    <property type="evidence" value="ECO:0000314"/>
    <property type="project" value="UniProtKB"/>
</dbReference>
<dbReference type="GO" id="GO:0008104">
    <property type="term" value="P:protein localization"/>
    <property type="evidence" value="ECO:0000266"/>
    <property type="project" value="RGD"/>
</dbReference>
<dbReference type="GO" id="GO:0006605">
    <property type="term" value="P:protein targeting"/>
    <property type="evidence" value="ECO:0000318"/>
    <property type="project" value="GO_Central"/>
</dbReference>
<dbReference type="GO" id="GO:0015031">
    <property type="term" value="P:protein transport"/>
    <property type="evidence" value="ECO:0007669"/>
    <property type="project" value="UniProtKB-KW"/>
</dbReference>
<dbReference type="GO" id="GO:0017157">
    <property type="term" value="P:regulation of exocytosis"/>
    <property type="evidence" value="ECO:0000250"/>
    <property type="project" value="UniProtKB"/>
</dbReference>
<dbReference type="GO" id="GO:1902513">
    <property type="term" value="P:regulation of organelle transport along microtubule"/>
    <property type="evidence" value="ECO:0000250"/>
    <property type="project" value="UniProtKB"/>
</dbReference>
<dbReference type="GO" id="GO:0099149">
    <property type="term" value="P:regulation of postsynaptic neurotransmitter receptor internalization"/>
    <property type="evidence" value="ECO:0000314"/>
    <property type="project" value="SynGO"/>
</dbReference>
<dbReference type="GO" id="GO:0008090">
    <property type="term" value="P:retrograde axonal transport"/>
    <property type="evidence" value="ECO:0000315"/>
    <property type="project" value="UniProtKB"/>
</dbReference>
<dbReference type="GO" id="GO:0047496">
    <property type="term" value="P:vesicle transport along microtubule"/>
    <property type="evidence" value="ECO:0000266"/>
    <property type="project" value="RGD"/>
</dbReference>
<dbReference type="InterPro" id="IPR006933">
    <property type="entry name" value="HAP1_N"/>
</dbReference>
<dbReference type="InterPro" id="IPR051946">
    <property type="entry name" value="Intracell_Traff-Reg"/>
</dbReference>
<dbReference type="PANTHER" id="PTHR15751:SF14">
    <property type="entry name" value="HUNTINGTIN-ASSOCIATED PROTEIN 1"/>
    <property type="match status" value="1"/>
</dbReference>
<dbReference type="PANTHER" id="PTHR15751">
    <property type="entry name" value="TRAFFICKING KINESIN-BINDING PROTEIN"/>
    <property type="match status" value="1"/>
</dbReference>
<dbReference type="Pfam" id="PF04849">
    <property type="entry name" value="HAP1_N"/>
    <property type="match status" value="1"/>
</dbReference>
<dbReference type="SMART" id="SM01424">
    <property type="entry name" value="HAP1_N"/>
    <property type="match status" value="1"/>
</dbReference>
<feature type="chain" id="PRO_0000083896" description="Huntingtin-associated protein 1">
    <location>
        <begin position="1"/>
        <end position="629"/>
    </location>
</feature>
<feature type="domain" description="HAP1 N-terminal">
    <location>
        <begin position="80"/>
        <end position="404"/>
    </location>
</feature>
<feature type="region of interest" description="Disordered" evidence="5">
    <location>
        <begin position="1"/>
        <end position="71"/>
    </location>
</feature>
<feature type="region of interest" description="Sufficient for interaction with KIF5B" evidence="16">
    <location>
        <begin position="153"/>
        <end position="320"/>
    </location>
</feature>
<feature type="region of interest" description="Interaction with TBP" evidence="1">
    <location>
        <begin position="158"/>
        <end position="262"/>
    </location>
</feature>
<feature type="region of interest" description="Disordered" evidence="5">
    <location>
        <begin position="213"/>
        <end position="261"/>
    </location>
</feature>
<feature type="region of interest" description="Sufficient for self-association and interaction with HD">
    <location>
        <begin position="277"/>
        <end position="445"/>
    </location>
</feature>
<feature type="region of interest" description="Disordered" evidence="5">
    <location>
        <begin position="363"/>
        <end position="412"/>
    </location>
</feature>
<feature type="region of interest" description="Disordered" evidence="5">
    <location>
        <begin position="458"/>
        <end position="531"/>
    </location>
</feature>
<feature type="region of interest" description="Interaction with TBP" evidence="1">
    <location>
        <begin position="474"/>
        <end position="583"/>
    </location>
</feature>
<feature type="region of interest" description="Disordered" evidence="5">
    <location>
        <begin position="563"/>
        <end position="629"/>
    </location>
</feature>
<feature type="coiled-coil region" evidence="4">
    <location>
        <begin position="169"/>
        <end position="300"/>
    </location>
</feature>
<feature type="coiled-coil region" evidence="4">
    <location>
        <begin position="328"/>
        <end position="369"/>
    </location>
</feature>
<feature type="compositionally biased region" description="Polar residues" evidence="5">
    <location>
        <begin position="1"/>
        <end position="12"/>
    </location>
</feature>
<feature type="compositionally biased region" description="Low complexity" evidence="5">
    <location>
        <begin position="20"/>
        <end position="31"/>
    </location>
</feature>
<feature type="compositionally biased region" description="Pro residues" evidence="5">
    <location>
        <begin position="32"/>
        <end position="44"/>
    </location>
</feature>
<feature type="compositionally biased region" description="Polar residues" evidence="5">
    <location>
        <begin position="52"/>
        <end position="62"/>
    </location>
</feature>
<feature type="compositionally biased region" description="Acidic residues" evidence="5">
    <location>
        <begin position="215"/>
        <end position="236"/>
    </location>
</feature>
<feature type="compositionally biased region" description="Basic and acidic residues" evidence="5">
    <location>
        <begin position="237"/>
        <end position="249"/>
    </location>
</feature>
<feature type="compositionally biased region" description="Basic and acidic residues" evidence="5">
    <location>
        <begin position="388"/>
        <end position="399"/>
    </location>
</feature>
<feature type="compositionally biased region" description="Acidic residues" evidence="5">
    <location>
        <begin position="480"/>
        <end position="495"/>
    </location>
</feature>
<feature type="compositionally biased region" description="Acidic residues" evidence="5">
    <location>
        <begin position="505"/>
        <end position="528"/>
    </location>
</feature>
<feature type="compositionally biased region" description="Basic and acidic residues" evidence="5">
    <location>
        <begin position="606"/>
        <end position="623"/>
    </location>
</feature>
<feature type="splice variant" id="VSP_004280" description="In isoform A." evidence="25">
    <original>DSPAPQQQTNMGGGIVEQQPIVPTQDSQRLEEDRATHSPSAREEEGPSGAT</original>
    <variation>GECSRRGHPPASGTSYRSSTL</variation>
    <location>
        <begin position="579"/>
        <end position="629"/>
    </location>
</feature>
<feature type="modified residue" description="Phosphothreonine" evidence="12">
    <location sequence="P54256-2">
        <position position="598"/>
    </location>
</feature>
<gene>
    <name type="primary">Hap1</name>
</gene>
<sequence length="629" mass="70213">MRPKDQVQSSAGDGTGSGDPATGTPTTQPAADPAPEPSAEPKPAPAQGTGSGQKSGSRTKTGGSFCRSRIRGDSDAPWTRYIFQGPYGPRATGLGTGRAEGIWKTPAAYIGRRPGVSGPERAAFIRELQEALCPNPLPRKKITEDDIKVMLYLLEEKERDLNTAARIGQSLVKQNSVLMEENNKLETMLGSAREEILHLRKQVNLRDDLLQLYSDSDDDEEDEEDEEEEEGEEEEREGQRDQDQQHDHPYGAPKPPPKAETLHHCPQLEALKQKLKLLEEENDHLREEASHLDNLEDKEQMLILECVEQFSEASQQMAELSEVLVLRLEGYERQQKEITQLQAEITKLQQRCQSYGAQTEKLQQQLASEKGVHPESLRAGSHMQDYGSRPRERQEDGKSHRQRSSMPAGSVTHYGYSVPLDALPSFPETLAEELRTSLRKFITDPAYFMERCDTRCREERKKEQGTMPPPPVQDLKPPEDFEAPEELVPEEELGAIEEVGTAEDGPAEETEQASEETEAWEEVEPEVDEATRMNVVVSALEASGLGPSHLDMKYVLQQLSNWQDAHSKRQQKQKVVPKDSPAPQQQTNMGGGIVEQQPIVPTQDSQRLEEDRATHSPSAREEEGPSGAT</sequence>
<evidence type="ECO:0000250" key="1"/>
<evidence type="ECO:0000250" key="2">
    <source>
        <dbReference type="UniProtKB" id="O35668"/>
    </source>
</evidence>
<evidence type="ECO:0000250" key="3">
    <source>
        <dbReference type="UniProtKB" id="P54257"/>
    </source>
</evidence>
<evidence type="ECO:0000255" key="4"/>
<evidence type="ECO:0000256" key="5">
    <source>
        <dbReference type="SAM" id="MobiDB-lite"/>
    </source>
</evidence>
<evidence type="ECO:0000269" key="6">
    <source>
    </source>
</evidence>
<evidence type="ECO:0000269" key="7">
    <source>
    </source>
</evidence>
<evidence type="ECO:0000269" key="8">
    <source>
    </source>
</evidence>
<evidence type="ECO:0000269" key="9">
    <source>
    </source>
</evidence>
<evidence type="ECO:0000269" key="10">
    <source>
    </source>
</evidence>
<evidence type="ECO:0000269" key="11">
    <source>
    </source>
</evidence>
<evidence type="ECO:0000269" key="12">
    <source>
    </source>
</evidence>
<evidence type="ECO:0000269" key="13">
    <source>
    </source>
</evidence>
<evidence type="ECO:0000269" key="14">
    <source>
    </source>
</evidence>
<evidence type="ECO:0000269" key="15">
    <source>
    </source>
</evidence>
<evidence type="ECO:0000269" key="16">
    <source>
    </source>
</evidence>
<evidence type="ECO:0000269" key="17">
    <source>
    </source>
</evidence>
<evidence type="ECO:0000269" key="18">
    <source>
    </source>
</evidence>
<evidence type="ECO:0000269" key="19">
    <source>
    </source>
</evidence>
<evidence type="ECO:0000269" key="20">
    <source>
    </source>
</evidence>
<evidence type="ECO:0000269" key="21">
    <source>
    </source>
</evidence>
<evidence type="ECO:0000269" key="22">
    <source>
    </source>
</evidence>
<evidence type="ECO:0000269" key="23">
    <source>
    </source>
</evidence>
<evidence type="ECO:0000269" key="24">
    <source>
    </source>
</evidence>
<evidence type="ECO:0000303" key="25">
    <source>
    </source>
</evidence>
<keyword id="KW-0025">Alternative splicing</keyword>
<keyword id="KW-0072">Autophagy</keyword>
<keyword id="KW-0966">Cell projection</keyword>
<keyword id="KW-0970">Cilium biogenesis/degradation</keyword>
<keyword id="KW-0175">Coiled coil</keyword>
<keyword id="KW-0963">Cytoplasm</keyword>
<keyword id="KW-0968">Cytoplasmic vesicle</keyword>
<keyword id="KW-0206">Cytoskeleton</keyword>
<keyword id="KW-0256">Endoplasmic reticulum</keyword>
<keyword id="KW-0967">Endosome</keyword>
<keyword id="KW-0268">Exocytosis</keyword>
<keyword id="KW-0458">Lysosome</keyword>
<keyword id="KW-0496">Mitochondrion</keyword>
<keyword id="KW-0539">Nucleus</keyword>
<keyword id="KW-0597">Phosphoprotein</keyword>
<keyword id="KW-0653">Protein transport</keyword>
<keyword id="KW-1185">Reference proteome</keyword>
<keyword id="KW-0770">Synapse</keyword>
<keyword id="KW-0813">Transport</keyword>